<dbReference type="EMBL" id="BX251412">
    <property type="protein sequence ID" value="CAD67420.1"/>
    <property type="molecule type" value="Genomic_DNA"/>
</dbReference>
<dbReference type="RefSeq" id="WP_011096698.1">
    <property type="nucleotide sequence ID" value="NC_004551.1"/>
</dbReference>
<dbReference type="SMR" id="Q83N75"/>
<dbReference type="GeneID" id="67388542"/>
<dbReference type="KEGG" id="tws:TW761"/>
<dbReference type="HOGENOM" id="CLU_057217_4_0_11"/>
<dbReference type="GO" id="GO:0005737">
    <property type="term" value="C:cytoplasm"/>
    <property type="evidence" value="ECO:0007669"/>
    <property type="project" value="UniProtKB-SubCell"/>
</dbReference>
<dbReference type="GO" id="GO:0000774">
    <property type="term" value="F:adenyl-nucleotide exchange factor activity"/>
    <property type="evidence" value="ECO:0007669"/>
    <property type="project" value="InterPro"/>
</dbReference>
<dbReference type="GO" id="GO:0042803">
    <property type="term" value="F:protein homodimerization activity"/>
    <property type="evidence" value="ECO:0007669"/>
    <property type="project" value="InterPro"/>
</dbReference>
<dbReference type="GO" id="GO:0051087">
    <property type="term" value="F:protein-folding chaperone binding"/>
    <property type="evidence" value="ECO:0007669"/>
    <property type="project" value="InterPro"/>
</dbReference>
<dbReference type="GO" id="GO:0051082">
    <property type="term" value="F:unfolded protein binding"/>
    <property type="evidence" value="ECO:0007669"/>
    <property type="project" value="TreeGrafter"/>
</dbReference>
<dbReference type="GO" id="GO:0006457">
    <property type="term" value="P:protein folding"/>
    <property type="evidence" value="ECO:0007669"/>
    <property type="project" value="InterPro"/>
</dbReference>
<dbReference type="CDD" id="cd00446">
    <property type="entry name" value="GrpE"/>
    <property type="match status" value="1"/>
</dbReference>
<dbReference type="Gene3D" id="3.90.20.20">
    <property type="match status" value="1"/>
</dbReference>
<dbReference type="Gene3D" id="2.30.22.10">
    <property type="entry name" value="Head domain of nucleotide exchange factor GrpE"/>
    <property type="match status" value="1"/>
</dbReference>
<dbReference type="HAMAP" id="MF_01151">
    <property type="entry name" value="GrpE"/>
    <property type="match status" value="1"/>
</dbReference>
<dbReference type="InterPro" id="IPR000740">
    <property type="entry name" value="GrpE"/>
</dbReference>
<dbReference type="InterPro" id="IPR013805">
    <property type="entry name" value="GrpE_coiled_coil"/>
</dbReference>
<dbReference type="InterPro" id="IPR009012">
    <property type="entry name" value="GrpE_head"/>
</dbReference>
<dbReference type="PANTHER" id="PTHR21237">
    <property type="entry name" value="GRPE PROTEIN"/>
    <property type="match status" value="1"/>
</dbReference>
<dbReference type="PANTHER" id="PTHR21237:SF23">
    <property type="entry name" value="GRPE PROTEIN HOMOLOG, MITOCHONDRIAL"/>
    <property type="match status" value="1"/>
</dbReference>
<dbReference type="Pfam" id="PF01025">
    <property type="entry name" value="GrpE"/>
    <property type="match status" value="1"/>
</dbReference>
<dbReference type="PRINTS" id="PR00773">
    <property type="entry name" value="GRPEPROTEIN"/>
</dbReference>
<dbReference type="SUPFAM" id="SSF58014">
    <property type="entry name" value="Coiled-coil domain of nucleotide exchange factor GrpE"/>
    <property type="match status" value="1"/>
</dbReference>
<dbReference type="SUPFAM" id="SSF51064">
    <property type="entry name" value="Head domain of nucleotide exchange factor GrpE"/>
    <property type="match status" value="1"/>
</dbReference>
<dbReference type="PROSITE" id="PS01071">
    <property type="entry name" value="GRPE"/>
    <property type="match status" value="1"/>
</dbReference>
<proteinExistence type="inferred from homology"/>
<protein>
    <recommendedName>
        <fullName evidence="1">Protein GrpE</fullName>
    </recommendedName>
    <alternativeName>
        <fullName evidence="1">HSP-70 cofactor</fullName>
    </alternativeName>
</protein>
<gene>
    <name evidence="1" type="primary">grpE</name>
    <name type="ordered locus">TW761</name>
</gene>
<keyword id="KW-0143">Chaperone</keyword>
<keyword id="KW-0963">Cytoplasm</keyword>
<keyword id="KW-0346">Stress response</keyword>
<feature type="chain" id="PRO_0000113888" description="Protein GrpE">
    <location>
        <begin position="1"/>
        <end position="189"/>
    </location>
</feature>
<feature type="region of interest" description="Disordered" evidence="2">
    <location>
        <begin position="1"/>
        <end position="54"/>
    </location>
</feature>
<feature type="compositionally biased region" description="Basic and acidic residues" evidence="2">
    <location>
        <begin position="1"/>
        <end position="38"/>
    </location>
</feature>
<comment type="function">
    <text evidence="1">Participates actively in the response to hyperosmotic and heat shock by preventing the aggregation of stress-denatured proteins, in association with DnaK and GrpE. It is the nucleotide exchange factor for DnaK and may function as a thermosensor. Unfolded proteins bind initially to DnaJ; upon interaction with the DnaJ-bound protein, DnaK hydrolyzes its bound ATP, resulting in the formation of a stable complex. GrpE releases ADP from DnaK; ATP binding to DnaK triggers the release of the substrate protein, thus completing the reaction cycle. Several rounds of ATP-dependent interactions between DnaJ, DnaK and GrpE are required for fully efficient folding.</text>
</comment>
<comment type="subunit">
    <text evidence="1">Homodimer.</text>
</comment>
<comment type="subcellular location">
    <subcellularLocation>
        <location evidence="1">Cytoplasm</location>
    </subcellularLocation>
</comment>
<comment type="similarity">
    <text evidence="1">Belongs to the GrpE family.</text>
</comment>
<evidence type="ECO:0000255" key="1">
    <source>
        <dbReference type="HAMAP-Rule" id="MF_01151"/>
    </source>
</evidence>
<evidence type="ECO:0000256" key="2">
    <source>
        <dbReference type="SAM" id="MobiDB-lite"/>
    </source>
</evidence>
<accession>Q83N75</accession>
<organism>
    <name type="scientific">Tropheryma whipplei (strain TW08/27)</name>
    <name type="common">Whipple's bacillus</name>
    <dbReference type="NCBI Taxonomy" id="218496"/>
    <lineage>
        <taxon>Bacteria</taxon>
        <taxon>Bacillati</taxon>
        <taxon>Actinomycetota</taxon>
        <taxon>Actinomycetes</taxon>
        <taxon>Micrococcales</taxon>
        <taxon>Tropherymataceae</taxon>
        <taxon>Tropheryma</taxon>
    </lineage>
</organism>
<name>GRPE_TROW8</name>
<sequence>MTKSNETERMEESEETHSSDIRSASESDHASGSDHTESADEIPTADAEQGELEQLEKLKDDLARERAAFHNFRMARAKQAEIERDRTRSEVIRVILPVLDDFARIEKHSTLDDPFKAVITKLRSAMEKIGLTAFGNPGDPFNPELHEALFQNPSPDVQTETVQDVIEAGYCLGETVIRAAKVVVQVPNG</sequence>
<reference key="1">
    <citation type="journal article" date="2003" name="Lancet">
        <title>Sequencing and analysis of the genome of the Whipple's disease bacterium Tropheryma whipplei.</title>
        <authorList>
            <person name="Bentley S.D."/>
            <person name="Maiwald M."/>
            <person name="Murphy L.D."/>
            <person name="Pallen M.J."/>
            <person name="Yeats C.A."/>
            <person name="Dover L.G."/>
            <person name="Norbertczak H.T."/>
            <person name="Besra G.S."/>
            <person name="Quail M.A."/>
            <person name="Harris D.E."/>
            <person name="von Herbay A."/>
            <person name="Goble A."/>
            <person name="Rutter S."/>
            <person name="Squares R."/>
            <person name="Squares S."/>
            <person name="Barrell B.G."/>
            <person name="Parkhill J."/>
            <person name="Relman D.A."/>
        </authorList>
    </citation>
    <scope>NUCLEOTIDE SEQUENCE [LARGE SCALE GENOMIC DNA]</scope>
    <source>
        <strain>TW08/27</strain>
    </source>
</reference>